<proteinExistence type="evidence at protein level"/>
<geneLocation type="chloroplast"/>
<gene>
    <name evidence="1" type="primary">psb30</name>
    <name evidence="1" type="synonym">ycf12</name>
</gene>
<organism>
    <name type="scientific">Thalassiosira pseudonana</name>
    <name type="common">Marine diatom</name>
    <name type="synonym">Cyclotella nana</name>
    <dbReference type="NCBI Taxonomy" id="35128"/>
    <lineage>
        <taxon>Eukaryota</taxon>
        <taxon>Sar</taxon>
        <taxon>Stramenopiles</taxon>
        <taxon>Ochrophyta</taxon>
        <taxon>Bacillariophyta</taxon>
        <taxon>Coscinodiscophyceae</taxon>
        <taxon>Thalassiosirophycidae</taxon>
        <taxon>Thalassiosirales</taxon>
        <taxon>Thalassiosiraceae</taxon>
        <taxon>Thalassiosira</taxon>
    </lineage>
</organism>
<evidence type="ECO:0000255" key="1">
    <source>
        <dbReference type="HAMAP-Rule" id="MF_01329"/>
    </source>
</evidence>
<evidence type="ECO:0007829" key="2">
    <source>
        <dbReference type="PDB" id="8IWH"/>
    </source>
</evidence>
<reference key="1">
    <citation type="journal article" date="2007" name="Mol. Genet. Genomics">
        <title>Chloroplast genomes of the diatoms Phaeodactylum tricornutum and Thalassiosira pseudonana: comparison with other plastid genomes of the red lineage.</title>
        <authorList>
            <person name="Oudot-Le Secq M.-P."/>
            <person name="Grimwood J."/>
            <person name="Shapiro H."/>
            <person name="Armbrust E.V."/>
            <person name="Bowler C."/>
            <person name="Green B.R."/>
        </authorList>
    </citation>
    <scope>NUCLEOTIDE SEQUENCE [LARGE SCALE GENOMIC DNA]</scope>
    <source>
        <strain>CCMP1335 / NEPCC58 / CCAP 1085/12</strain>
    </source>
</reference>
<feature type="chain" id="PRO_0000276562" description="Photosystem II reaction center protein Psb30">
    <location>
        <begin position="1"/>
        <end position="34"/>
    </location>
</feature>
<feature type="transmembrane region" description="Helical" evidence="1">
    <location>
        <begin position="6"/>
        <end position="26"/>
    </location>
</feature>
<feature type="helix" evidence="2">
    <location>
        <begin position="4"/>
        <end position="30"/>
    </location>
</feature>
<protein>
    <recommendedName>
        <fullName evidence="1">Photosystem II reaction center protein Psb30</fullName>
    </recommendedName>
    <alternativeName>
        <fullName evidence="1">Photosystem II reaction center protein Ycf12</fullName>
    </alternativeName>
</protein>
<comment type="function">
    <text evidence="1">A core subunit of photosystem II (PSII), probably helps stabilize the reaction center.</text>
</comment>
<comment type="subunit">
    <text evidence="1">PSII is composed of 1 copy each of membrane proteins PsbA, PsbB, PsbC, PsbD, PsbE, PsbF, PsbH, PsbI, PsbJ, PsbK, PsbL, PsbM, PsbT, PsbX, PsbY, PsbZ, Psb30/Ycf12, peripheral proteins of the oxygen-evolving complex and a large number of cofactors. It forms dimeric complexes.</text>
</comment>
<comment type="subcellular location">
    <subcellularLocation>
        <location evidence="1">Plastid</location>
        <location evidence="1">Chloroplast thylakoid membrane</location>
        <topology evidence="1">Single-pass membrane protein</topology>
    </subcellularLocation>
</comment>
<comment type="similarity">
    <text evidence="1">Belongs to the Psb30/Ycf12 family.</text>
</comment>
<dbReference type="EMBL" id="EF067921">
    <property type="protein sequence ID" value="ABK20767.1"/>
    <property type="molecule type" value="Genomic_DNA"/>
</dbReference>
<dbReference type="RefSeq" id="YP_874544.1">
    <property type="nucleotide sequence ID" value="NC_008589.1"/>
</dbReference>
<dbReference type="PDB" id="8IWH">
    <property type="method" value="EM"/>
    <property type="resolution" value="2.68 A"/>
    <property type="chains" value="Y/y=1-34"/>
</dbReference>
<dbReference type="PDBsum" id="8IWH"/>
<dbReference type="EMDB" id="EMD-35766"/>
<dbReference type="SMR" id="A0T0T2"/>
<dbReference type="STRING" id="35128.A0T0T2"/>
<dbReference type="GeneID" id="4524835"/>
<dbReference type="InParanoid" id="A0T0T2"/>
<dbReference type="GO" id="GO:0009535">
    <property type="term" value="C:chloroplast thylakoid membrane"/>
    <property type="evidence" value="ECO:0007669"/>
    <property type="project" value="UniProtKB-SubCell"/>
</dbReference>
<dbReference type="GO" id="GO:0009523">
    <property type="term" value="C:photosystem II"/>
    <property type="evidence" value="ECO:0007669"/>
    <property type="project" value="UniProtKB-KW"/>
</dbReference>
<dbReference type="GO" id="GO:0015979">
    <property type="term" value="P:photosynthesis"/>
    <property type="evidence" value="ECO:0007669"/>
    <property type="project" value="UniProtKB-KW"/>
</dbReference>
<dbReference type="HAMAP" id="MF_01329">
    <property type="entry name" value="PSII_Psb30_Ycf12"/>
    <property type="match status" value="1"/>
</dbReference>
<dbReference type="InterPro" id="IPR010284">
    <property type="entry name" value="PSII_Ycf12_core-subunit"/>
</dbReference>
<dbReference type="NCBIfam" id="NF010239">
    <property type="entry name" value="PRK13686.1"/>
    <property type="match status" value="1"/>
</dbReference>
<dbReference type="Pfam" id="PF05969">
    <property type="entry name" value="PSII_Ycf12"/>
    <property type="match status" value="1"/>
</dbReference>
<keyword id="KW-0002">3D-structure</keyword>
<keyword id="KW-0150">Chloroplast</keyword>
<keyword id="KW-0472">Membrane</keyword>
<keyword id="KW-0602">Photosynthesis</keyword>
<keyword id="KW-0604">Photosystem II</keyword>
<keyword id="KW-0934">Plastid</keyword>
<keyword id="KW-0793">Thylakoid</keyword>
<keyword id="KW-0812">Transmembrane</keyword>
<keyword id="KW-1133">Transmembrane helix</keyword>
<name>PSB30_THAPS</name>
<accession>A0T0T2</accession>
<sequence>MVNWQVIGQLVSTGAIMLLGPAIIILLALKKGNL</sequence>